<organism>
    <name type="scientific">Saccharomyces cerevisiae (strain ATCC 204508 / S288c)</name>
    <name type="common">Baker's yeast</name>
    <dbReference type="NCBI Taxonomy" id="559292"/>
    <lineage>
        <taxon>Eukaryota</taxon>
        <taxon>Fungi</taxon>
        <taxon>Dikarya</taxon>
        <taxon>Ascomycota</taxon>
        <taxon>Saccharomycotina</taxon>
        <taxon>Saccharomycetes</taxon>
        <taxon>Saccharomycetales</taxon>
        <taxon>Saccharomycetaceae</taxon>
        <taxon>Saccharomyces</taxon>
    </lineage>
</organism>
<keyword id="KW-0002">3D-structure</keyword>
<keyword id="KW-0256">Endoplasmic reticulum</keyword>
<keyword id="KW-0342">GTP-binding</keyword>
<keyword id="KW-0472">Membrane</keyword>
<keyword id="KW-0547">Nucleotide-binding</keyword>
<keyword id="KW-0597">Phosphoprotein</keyword>
<keyword id="KW-0675">Receptor</keyword>
<keyword id="KW-1185">Reference proteome</keyword>
<sequence length="621" mass="69278">MFDQLAVFTPQGQVLYQYNCLGKKFSEIQINSFISQLITSPVTRKESVANANTDGFDFNLLTINSEHKNSPSFNALFYLNKQPELYFVVTFAEQTLELNQETQQTLALVLKLWNSLHLSESILKNRQGQNEKNKHNYVDILQGIEDDLKKFEQYFRIKYEESIKQDHINPDNFTKNGSVPQSHNKNTKKKLRDTKGKKQSTGNVGSGRKWGRDGGMLDEMNHEDAAKLDFSSSNSHNSSQVALDSTINKDSFGDRTEGGDFLIKEIDDLLSSHKDEITSGNEAKNSGYVSTAFGFLQKHVLGNKTINESDLKSVLEKLTQQLITKNVAPEAADYLTQQVSHDLVGSKTANWTSVENTARESLTKALTQILTPGVSVDLLREIQSKRSKKDEEGKCDPYVFSIVGVNGVGKSTNLSKLAFWLLQNNFKVLIVACDTFRSGAVEQLRVHVENLAQLMDDSHVRGSKNKRGKTGNDYVELFEAGYGGSDLVTKIAKQAIKYSRDQNFDIVLMDTAGRRHNDPTLMSPLKSFADQAKPDKIIMVGEALVGTDSVQQAKNFNDAFGKGRNLDFFIISKCDTVGEMLGTMVNMVYATGIPILFVGVGQTYTDLRTLSVKWAVNTLMS</sequence>
<feature type="chain" id="PRO_0000101216" description="Signal recognition particle receptor subunit alpha homolog">
    <location>
        <begin position="1"/>
        <end position="621"/>
    </location>
</feature>
<feature type="region of interest" description="SRX">
    <location>
        <begin position="1"/>
        <end position="158"/>
    </location>
</feature>
<feature type="region of interest" description="Disordered" evidence="3">
    <location>
        <begin position="167"/>
        <end position="217"/>
    </location>
</feature>
<feature type="region of interest" description="NG domain" evidence="2">
    <location>
        <begin position="398"/>
        <end position="620"/>
    </location>
</feature>
<feature type="compositionally biased region" description="Polar residues" evidence="3">
    <location>
        <begin position="171"/>
        <end position="183"/>
    </location>
</feature>
<feature type="compositionally biased region" description="Basic residues" evidence="3">
    <location>
        <begin position="185"/>
        <end position="198"/>
    </location>
</feature>
<feature type="binding site" evidence="1">
    <location>
        <begin position="404"/>
        <end position="411"/>
    </location>
    <ligand>
        <name>GTP</name>
        <dbReference type="ChEBI" id="CHEBI:37565"/>
    </ligand>
</feature>
<feature type="binding site" evidence="1">
    <location>
        <begin position="510"/>
        <end position="514"/>
    </location>
    <ligand>
        <name>GTP</name>
        <dbReference type="ChEBI" id="CHEBI:37565"/>
    </ligand>
</feature>
<feature type="binding site" evidence="1">
    <location>
        <begin position="572"/>
        <end position="575"/>
    </location>
    <ligand>
        <name>GTP</name>
        <dbReference type="ChEBI" id="CHEBI:37565"/>
    </ligand>
</feature>
<feature type="modified residue" description="Phosphoserine" evidence="9">
    <location>
        <position position="239"/>
    </location>
</feature>
<feature type="modified residue" description="Phosphoserine" evidence="8 9">
    <location>
        <position position="523"/>
    </location>
</feature>
<feature type="sequence conflict" description="In Ref. 1; AAA35093." evidence="7" ref="1">
    <original>S</original>
    <variation>A</variation>
    <location>
        <position position="499"/>
    </location>
</feature>
<feature type="strand" evidence="10">
    <location>
        <begin position="4"/>
        <end position="8"/>
    </location>
</feature>
<feature type="strand" evidence="10">
    <location>
        <begin position="13"/>
        <end position="19"/>
    </location>
</feature>
<feature type="helix" evidence="10">
    <location>
        <begin position="27"/>
        <end position="39"/>
    </location>
</feature>
<feature type="helix" evidence="10">
    <location>
        <begin position="44"/>
        <end position="46"/>
    </location>
</feature>
<feature type="helix" evidence="10">
    <location>
        <begin position="51"/>
        <end position="53"/>
    </location>
</feature>
<feature type="strand" evidence="10">
    <location>
        <begin position="58"/>
        <end position="62"/>
    </location>
</feature>
<feature type="strand" evidence="10">
    <location>
        <begin position="74"/>
        <end position="80"/>
    </location>
</feature>
<feature type="turn" evidence="10">
    <location>
        <begin position="81"/>
        <end position="84"/>
    </location>
</feature>
<feature type="strand" evidence="10">
    <location>
        <begin position="85"/>
        <end position="93"/>
    </location>
</feature>
<feature type="helix" evidence="10">
    <location>
        <begin position="96"/>
        <end position="115"/>
    </location>
</feature>
<feature type="helix" evidence="10">
    <location>
        <begin position="118"/>
        <end position="125"/>
    </location>
</feature>
<feature type="strand" evidence="10">
    <location>
        <begin position="127"/>
        <end position="129"/>
    </location>
</feature>
<feature type="turn" evidence="10">
    <location>
        <begin position="140"/>
        <end position="144"/>
    </location>
</feature>
<feature type="helix" evidence="10">
    <location>
        <begin position="145"/>
        <end position="152"/>
    </location>
</feature>
<reference key="1">
    <citation type="journal article" date="1992" name="Mol. Biol. Cell">
        <title>Signal recognition particle receptor is important for cell growth and protein secretion in Saccharomyces cerevisiae.</title>
        <authorList>
            <person name="Ogg S.C."/>
            <person name="Poritz M.A."/>
            <person name="Walter P."/>
        </authorList>
    </citation>
    <scope>NUCLEOTIDE SEQUENCE [GENOMIC DNA]</scope>
    <scope>FUNCTION</scope>
    <scope>SUBCELLULAR LOCATION</scope>
</reference>
<reference key="2">
    <citation type="journal article" date="1997" name="Nature">
        <title>The nucleotide sequence of Saccharomyces cerevisiae chromosome IV.</title>
        <authorList>
            <person name="Jacq C."/>
            <person name="Alt-Moerbe J."/>
            <person name="Andre B."/>
            <person name="Arnold W."/>
            <person name="Bahr A."/>
            <person name="Ballesta J.P.G."/>
            <person name="Bargues M."/>
            <person name="Baron L."/>
            <person name="Becker A."/>
            <person name="Biteau N."/>
            <person name="Bloecker H."/>
            <person name="Blugeon C."/>
            <person name="Boskovic J."/>
            <person name="Brandt P."/>
            <person name="Brueckner M."/>
            <person name="Buitrago M.J."/>
            <person name="Coster F."/>
            <person name="Delaveau T."/>
            <person name="del Rey F."/>
            <person name="Dujon B."/>
            <person name="Eide L.G."/>
            <person name="Garcia-Cantalejo J.M."/>
            <person name="Goffeau A."/>
            <person name="Gomez-Peris A."/>
            <person name="Granotier C."/>
            <person name="Hanemann V."/>
            <person name="Hankeln T."/>
            <person name="Hoheisel J.D."/>
            <person name="Jaeger W."/>
            <person name="Jimenez A."/>
            <person name="Jonniaux J.-L."/>
            <person name="Kraemer C."/>
            <person name="Kuester H."/>
            <person name="Laamanen P."/>
            <person name="Legros Y."/>
            <person name="Louis E.J."/>
            <person name="Moeller-Rieker S."/>
            <person name="Monnet A."/>
            <person name="Moro M."/>
            <person name="Mueller-Auer S."/>
            <person name="Nussbaumer B."/>
            <person name="Paricio N."/>
            <person name="Paulin L."/>
            <person name="Perea J."/>
            <person name="Perez-Alonso M."/>
            <person name="Perez-Ortin J.E."/>
            <person name="Pohl T.M."/>
            <person name="Prydz H."/>
            <person name="Purnelle B."/>
            <person name="Rasmussen S.W."/>
            <person name="Remacha M.A."/>
            <person name="Revuelta J.L."/>
            <person name="Rieger M."/>
            <person name="Salom D."/>
            <person name="Saluz H.P."/>
            <person name="Saiz J.E."/>
            <person name="Saren A.-M."/>
            <person name="Schaefer M."/>
            <person name="Scharfe M."/>
            <person name="Schmidt E.R."/>
            <person name="Schneider C."/>
            <person name="Scholler P."/>
            <person name="Schwarz S."/>
            <person name="Soler-Mira A."/>
            <person name="Urrestarazu L.A."/>
            <person name="Verhasselt P."/>
            <person name="Vissers S."/>
            <person name="Voet M."/>
            <person name="Volckaert G."/>
            <person name="Wagner G."/>
            <person name="Wambutt R."/>
            <person name="Wedler E."/>
            <person name="Wedler H."/>
            <person name="Woelfl S."/>
            <person name="Harris D.E."/>
            <person name="Bowman S."/>
            <person name="Brown D."/>
            <person name="Churcher C.M."/>
            <person name="Connor R."/>
            <person name="Dedman K."/>
            <person name="Gentles S."/>
            <person name="Hamlin N."/>
            <person name="Hunt S."/>
            <person name="Jones L."/>
            <person name="McDonald S."/>
            <person name="Murphy L.D."/>
            <person name="Niblett D."/>
            <person name="Odell C."/>
            <person name="Oliver K."/>
            <person name="Rajandream M.A."/>
            <person name="Richards C."/>
            <person name="Shore L."/>
            <person name="Walsh S.V."/>
            <person name="Barrell B.G."/>
            <person name="Dietrich F.S."/>
            <person name="Mulligan J.T."/>
            <person name="Allen E."/>
            <person name="Araujo R."/>
            <person name="Aviles E."/>
            <person name="Berno A."/>
            <person name="Carpenter J."/>
            <person name="Chen E."/>
            <person name="Cherry J.M."/>
            <person name="Chung E."/>
            <person name="Duncan M."/>
            <person name="Hunicke-Smith S."/>
            <person name="Hyman R.W."/>
            <person name="Komp C."/>
            <person name="Lashkari D."/>
            <person name="Lew H."/>
            <person name="Lin D."/>
            <person name="Mosedale D."/>
            <person name="Nakahara K."/>
            <person name="Namath A."/>
            <person name="Oefner P."/>
            <person name="Oh C."/>
            <person name="Petel F.X."/>
            <person name="Roberts D."/>
            <person name="Schramm S."/>
            <person name="Schroeder M."/>
            <person name="Shogren T."/>
            <person name="Shroff N."/>
            <person name="Winant A."/>
            <person name="Yelton M.A."/>
            <person name="Botstein D."/>
            <person name="Davis R.W."/>
            <person name="Johnston M."/>
            <person name="Andrews S."/>
            <person name="Brinkman R."/>
            <person name="Cooper J."/>
            <person name="Ding H."/>
            <person name="Du Z."/>
            <person name="Favello A."/>
            <person name="Fulton L."/>
            <person name="Gattung S."/>
            <person name="Greco T."/>
            <person name="Hallsworth K."/>
            <person name="Hawkins J."/>
            <person name="Hillier L.W."/>
            <person name="Jier M."/>
            <person name="Johnson D."/>
            <person name="Johnston L."/>
            <person name="Kirsten J."/>
            <person name="Kucaba T."/>
            <person name="Langston Y."/>
            <person name="Latreille P."/>
            <person name="Le T."/>
            <person name="Mardis E."/>
            <person name="Menezes S."/>
            <person name="Miller N."/>
            <person name="Nhan M."/>
            <person name="Pauley A."/>
            <person name="Peluso D."/>
            <person name="Rifkin L."/>
            <person name="Riles L."/>
            <person name="Taich A."/>
            <person name="Trevaskis E."/>
            <person name="Vignati D."/>
            <person name="Wilcox L."/>
            <person name="Wohldman P."/>
            <person name="Vaudin M."/>
            <person name="Wilson R."/>
            <person name="Waterston R."/>
            <person name="Albermann K."/>
            <person name="Hani J."/>
            <person name="Heumann K."/>
            <person name="Kleine K."/>
            <person name="Mewes H.-W."/>
            <person name="Zollner A."/>
            <person name="Zaccaria P."/>
        </authorList>
    </citation>
    <scope>NUCLEOTIDE SEQUENCE [LARGE SCALE GENOMIC DNA]</scope>
    <source>
        <strain>ATCC 204508 / S288c</strain>
    </source>
</reference>
<reference key="3">
    <citation type="journal article" date="2014" name="G3 (Bethesda)">
        <title>The reference genome sequence of Saccharomyces cerevisiae: Then and now.</title>
        <authorList>
            <person name="Engel S.R."/>
            <person name="Dietrich F.S."/>
            <person name="Fisk D.G."/>
            <person name="Binkley G."/>
            <person name="Balakrishnan R."/>
            <person name="Costanzo M.C."/>
            <person name="Dwight S.S."/>
            <person name="Hitz B.C."/>
            <person name="Karra K."/>
            <person name="Nash R.S."/>
            <person name="Weng S."/>
            <person name="Wong E.D."/>
            <person name="Lloyd P."/>
            <person name="Skrzypek M.S."/>
            <person name="Miyasato S.R."/>
            <person name="Simison M."/>
            <person name="Cherry J.M."/>
        </authorList>
    </citation>
    <scope>GENOME REANNOTATION</scope>
    <source>
        <strain>ATCC 204508 / S288c</strain>
    </source>
</reference>
<reference key="4">
    <citation type="journal article" date="1998" name="J. Cell Biol.">
        <title>A functional GTPase domain, but not its transmembrane domain, is required for function of the SRP receptor beta-subunit.</title>
        <authorList>
            <person name="Ogg S.C."/>
            <person name="Barz W.P."/>
            <person name="Walter P."/>
        </authorList>
    </citation>
    <scope>INTERACTION WITH SRP102</scope>
</reference>
<reference key="5">
    <citation type="journal article" date="2003" name="Nature">
        <title>Global analysis of protein expression in yeast.</title>
        <authorList>
            <person name="Ghaemmaghami S."/>
            <person name="Huh W.-K."/>
            <person name="Bower K."/>
            <person name="Howson R.W."/>
            <person name="Belle A."/>
            <person name="Dephoure N."/>
            <person name="O'Shea E.K."/>
            <person name="Weissman J.S."/>
        </authorList>
    </citation>
    <scope>LEVEL OF PROTEIN EXPRESSION [LARGE SCALE ANALYSIS]</scope>
</reference>
<reference key="6">
    <citation type="journal article" date="2008" name="Mol. Cell. Proteomics">
        <title>A multidimensional chromatography technology for in-depth phosphoproteome analysis.</title>
        <authorList>
            <person name="Albuquerque C.P."/>
            <person name="Smolka M.B."/>
            <person name="Payne S.H."/>
            <person name="Bafna V."/>
            <person name="Eng J."/>
            <person name="Zhou H."/>
        </authorList>
    </citation>
    <scope>PHOSPHORYLATION [LARGE SCALE ANALYSIS] AT SER-523</scope>
    <scope>IDENTIFICATION BY MASS SPECTROMETRY [LARGE SCALE ANALYSIS]</scope>
</reference>
<reference key="7">
    <citation type="journal article" date="2009" name="Science">
        <title>Global analysis of Cdk1 substrate phosphorylation sites provides insights into evolution.</title>
        <authorList>
            <person name="Holt L.J."/>
            <person name="Tuch B.B."/>
            <person name="Villen J."/>
            <person name="Johnson A.D."/>
            <person name="Gygi S.P."/>
            <person name="Morgan D.O."/>
        </authorList>
    </citation>
    <scope>PHOSPHORYLATION [LARGE SCALE ANALYSIS] AT SER-239 AND SER-523</scope>
    <scope>IDENTIFICATION BY MASS SPECTROMETRY [LARGE SCALE ANALYSIS]</scope>
</reference>
<reference key="8">
    <citation type="journal article" date="2003" name="Cell">
        <title>Structural basis for the function of the beta subunit of the eukaryotic signal recognition particle receptor.</title>
        <authorList>
            <person name="Schwartz T."/>
            <person name="Blobel G."/>
        </authorList>
    </citation>
    <scope>X-RAY CRYSTALLOGRAPHY (1.7 ANGSTROMS) OF 1-158 IN COMPLEX WITH SRP102 AND GTP</scope>
</reference>
<name>SRPR_YEAST</name>
<gene>
    <name type="primary">SRP101</name>
    <name type="ordered locus">YDR292C</name>
    <name type="ORF">D9819.3</name>
</gene>
<protein>
    <recommendedName>
        <fullName>Signal recognition particle receptor subunit alpha homolog</fullName>
        <shortName>SR-alpha</shortName>
    </recommendedName>
    <alternativeName>
        <fullName>Docking protein alpha</fullName>
        <shortName>DP-alpha</shortName>
    </alternativeName>
</protein>
<comment type="function">
    <text evidence="5">Component of the SRP (signal recognition particle) receptor (SR). Ensures, in conjunction with the signal recognition particle, the correct targeting of the nascent secretory proteins to the endoplasmic reticulum membrane system. GTP hydrolysis may enhance the fidelity of and provide unidirectionality to the targeting reaction. It is important but not essential for cell growth. May be directly involved in mitochondrial protein import.</text>
</comment>
<comment type="subunit">
    <text evidence="4">Heterodimer of an alpha and a beta chain.</text>
</comment>
<comment type="interaction">
    <interactant intactId="EBI-18098">
        <id>P32916</id>
    </interactant>
    <interactant intactId="EBI-18091">
        <id>P36057</id>
        <label>SRP102</label>
    </interactant>
    <organismsDiffer>false</organismsDiffer>
    <experiments>6</experiments>
</comment>
<comment type="subcellular location">
    <subcellularLocation>
        <location evidence="5">Endoplasmic reticulum membrane</location>
        <topology evidence="5">Peripheral membrane protein</topology>
        <orientation evidence="5">Cytoplasmic side</orientation>
    </subcellularLocation>
    <text evidence="5">Thought to be anchored in the membrane through an interaction with SRP102/SR-beta, which contains a bona fide transmembrane domain.</text>
</comment>
<comment type="domain">
    <text>The SRX domain is sufficient for interaction with GTP-bound SRP102/SR-beta.</text>
</comment>
<comment type="domain">
    <text evidence="2">The NG domain, also named G domain, is a special guanosine triphosphatase (GTPase) domain, which forms a guanosine 5'-triphosphate (GTP)-dependent complex with a homologous NG domain in the signal recognition particle (SRP) complex subunit SRP54 (By similarity). The two NG domains undergo cooperative rearrangements upon their assembly, which culminate in the reciprocal activation of the GTPase activity of one another (By similarity). GTPase induced rearrangement of SR drives SRP-mediated cotranslational protein translocation into the ER (By similarity).</text>
</comment>
<comment type="miscellaneous">
    <text evidence="6">Present with 2000 molecules/cell in log phase SD medium.</text>
</comment>
<comment type="similarity">
    <text evidence="7">Belongs to the GTP-binding SRP family.</text>
</comment>
<accession>P32916</accession>
<accession>D6VSS1</accession>
<accession>Q05553</accession>
<dbReference type="EMBL" id="M77274">
    <property type="protein sequence ID" value="AAA35093.1"/>
    <property type="molecule type" value="Genomic_DNA"/>
</dbReference>
<dbReference type="EMBL" id="U51031">
    <property type="protein sequence ID" value="AAB64468.1"/>
    <property type="molecule type" value="Genomic_DNA"/>
</dbReference>
<dbReference type="EMBL" id="BK006938">
    <property type="protein sequence ID" value="DAA12131.1"/>
    <property type="molecule type" value="Genomic_DNA"/>
</dbReference>
<dbReference type="PIR" id="S70121">
    <property type="entry name" value="S70121"/>
</dbReference>
<dbReference type="RefSeq" id="NP_010578.3">
    <property type="nucleotide sequence ID" value="NM_001180600.3"/>
</dbReference>
<dbReference type="PDB" id="1NRJ">
    <property type="method" value="X-ray"/>
    <property type="resolution" value="1.70 A"/>
    <property type="chains" value="A=1-158"/>
</dbReference>
<dbReference type="PDBsum" id="1NRJ"/>
<dbReference type="SMR" id="P32916"/>
<dbReference type="BioGRID" id="32344">
    <property type="interactions" value="354"/>
</dbReference>
<dbReference type="ComplexPortal" id="CPX-780">
    <property type="entry name" value="Signal recognition particle receptor complex"/>
</dbReference>
<dbReference type="DIP" id="DIP-1672N"/>
<dbReference type="FunCoup" id="P32916">
    <property type="interactions" value="907"/>
</dbReference>
<dbReference type="IntAct" id="P32916">
    <property type="interactions" value="14"/>
</dbReference>
<dbReference type="MINT" id="P32916"/>
<dbReference type="STRING" id="4932.YDR292C"/>
<dbReference type="TCDB" id="3.A.5.8.1">
    <property type="family name" value="the general secretory pathway (sec) family"/>
</dbReference>
<dbReference type="iPTMnet" id="P32916"/>
<dbReference type="PaxDb" id="4932-YDR292C"/>
<dbReference type="PeptideAtlas" id="P32916"/>
<dbReference type="EnsemblFungi" id="YDR292C_mRNA">
    <property type="protein sequence ID" value="YDR292C"/>
    <property type="gene ID" value="YDR292C"/>
</dbReference>
<dbReference type="GeneID" id="851886"/>
<dbReference type="KEGG" id="sce:YDR292C"/>
<dbReference type="AGR" id="SGD:S000002700"/>
<dbReference type="SGD" id="S000002700">
    <property type="gene designation" value="SRP101"/>
</dbReference>
<dbReference type="VEuPathDB" id="FungiDB:YDR292C"/>
<dbReference type="eggNOG" id="KOG0781">
    <property type="taxonomic scope" value="Eukaryota"/>
</dbReference>
<dbReference type="GeneTree" id="ENSGT00550000074936"/>
<dbReference type="HOGENOM" id="CLU_009301_8_1_1"/>
<dbReference type="InParanoid" id="P32916"/>
<dbReference type="OMA" id="MVNMVYA"/>
<dbReference type="OrthoDB" id="1727884at2759"/>
<dbReference type="BioCyc" id="YEAST:G3O-29855-MONOMER"/>
<dbReference type="EvolutionaryTrace" id="P32916"/>
<dbReference type="PRO" id="PR:P32916"/>
<dbReference type="Proteomes" id="UP000002311">
    <property type="component" value="Chromosome IV"/>
</dbReference>
<dbReference type="RNAct" id="P32916">
    <property type="molecule type" value="protein"/>
</dbReference>
<dbReference type="GO" id="GO:0005783">
    <property type="term" value="C:endoplasmic reticulum"/>
    <property type="evidence" value="ECO:0007005"/>
    <property type="project" value="SGD"/>
</dbReference>
<dbReference type="GO" id="GO:0005789">
    <property type="term" value="C:endoplasmic reticulum membrane"/>
    <property type="evidence" value="ECO:0000314"/>
    <property type="project" value="SGD"/>
</dbReference>
<dbReference type="GO" id="GO:0016020">
    <property type="term" value="C:membrane"/>
    <property type="evidence" value="ECO:0000303"/>
    <property type="project" value="ComplexPortal"/>
</dbReference>
<dbReference type="GO" id="GO:0005785">
    <property type="term" value="C:signal recognition particle receptor complex"/>
    <property type="evidence" value="ECO:0000353"/>
    <property type="project" value="ComplexPortal"/>
</dbReference>
<dbReference type="GO" id="GO:0016887">
    <property type="term" value="F:ATP hydrolysis activity"/>
    <property type="evidence" value="ECO:0007669"/>
    <property type="project" value="InterPro"/>
</dbReference>
<dbReference type="GO" id="GO:0005525">
    <property type="term" value="F:GTP binding"/>
    <property type="evidence" value="ECO:0007669"/>
    <property type="project" value="UniProtKB-KW"/>
</dbReference>
<dbReference type="GO" id="GO:0003924">
    <property type="term" value="F:GTPase activity"/>
    <property type="evidence" value="ECO:0000318"/>
    <property type="project" value="GO_Central"/>
</dbReference>
<dbReference type="GO" id="GO:0005047">
    <property type="term" value="F:signal recognition particle binding"/>
    <property type="evidence" value="ECO:0000315"/>
    <property type="project" value="SGD"/>
</dbReference>
<dbReference type="GO" id="GO:0045047">
    <property type="term" value="P:protein targeting to ER"/>
    <property type="evidence" value="ECO:0000315"/>
    <property type="project" value="SGD"/>
</dbReference>
<dbReference type="GO" id="GO:0006617">
    <property type="term" value="P:SRP-dependent cotranslational protein targeting to membrane, signal sequence recognition"/>
    <property type="evidence" value="ECO:0000303"/>
    <property type="project" value="ComplexPortal"/>
</dbReference>
<dbReference type="CDD" id="cd14818">
    <property type="entry name" value="longin-like"/>
    <property type="match status" value="1"/>
</dbReference>
<dbReference type="CDD" id="cd17876">
    <property type="entry name" value="SRalpha_C"/>
    <property type="match status" value="1"/>
</dbReference>
<dbReference type="FunFam" id="3.40.50.300:FF:000566">
    <property type="entry name" value="Signal recognition particle receptor subunit alpha"/>
    <property type="match status" value="1"/>
</dbReference>
<dbReference type="FunFam" id="1.20.120.140:FF:000014">
    <property type="entry name" value="Srp101p"/>
    <property type="match status" value="1"/>
</dbReference>
<dbReference type="Gene3D" id="3.30.450.60">
    <property type="match status" value="1"/>
</dbReference>
<dbReference type="Gene3D" id="3.40.50.300">
    <property type="entry name" value="P-loop containing nucleotide triphosphate hydrolases"/>
    <property type="match status" value="1"/>
</dbReference>
<dbReference type="Gene3D" id="1.20.120.140">
    <property type="entry name" value="Signal recognition particle SRP54, nucleotide-binding domain"/>
    <property type="match status" value="1"/>
</dbReference>
<dbReference type="InterPro" id="IPR003593">
    <property type="entry name" value="AAA+_ATPase"/>
</dbReference>
<dbReference type="InterPro" id="IPR011012">
    <property type="entry name" value="Longin-like_dom_sf"/>
</dbReference>
<dbReference type="InterPro" id="IPR027417">
    <property type="entry name" value="P-loop_NTPase"/>
</dbReference>
<dbReference type="InterPro" id="IPR013822">
    <property type="entry name" value="Signal_recog_particl_SRP54_hlx"/>
</dbReference>
<dbReference type="InterPro" id="IPR036225">
    <property type="entry name" value="SRP/SRP_N"/>
</dbReference>
<dbReference type="InterPro" id="IPR000897">
    <property type="entry name" value="SRP54_GTPase_dom"/>
</dbReference>
<dbReference type="InterPro" id="IPR042101">
    <property type="entry name" value="SRP54_N_sf"/>
</dbReference>
<dbReference type="InterPro" id="IPR015284">
    <property type="entry name" value="SRX_dom"/>
</dbReference>
<dbReference type="PANTHER" id="PTHR43134">
    <property type="entry name" value="SIGNAL RECOGNITION PARTICLE RECEPTOR SUBUNIT ALPHA"/>
    <property type="match status" value="1"/>
</dbReference>
<dbReference type="PANTHER" id="PTHR43134:SF1">
    <property type="entry name" value="SIGNAL RECOGNITION PARTICLE RECEPTOR SUBUNIT ALPHA"/>
    <property type="match status" value="1"/>
</dbReference>
<dbReference type="Pfam" id="PF00448">
    <property type="entry name" value="SRP54"/>
    <property type="match status" value="2"/>
</dbReference>
<dbReference type="Pfam" id="PF02881">
    <property type="entry name" value="SRP54_N"/>
    <property type="match status" value="1"/>
</dbReference>
<dbReference type="Pfam" id="PF09201">
    <property type="entry name" value="SRX"/>
    <property type="match status" value="1"/>
</dbReference>
<dbReference type="SMART" id="SM00382">
    <property type="entry name" value="AAA"/>
    <property type="match status" value="1"/>
</dbReference>
<dbReference type="SMART" id="SM00962">
    <property type="entry name" value="SRP54"/>
    <property type="match status" value="1"/>
</dbReference>
<dbReference type="SMART" id="SM00963">
    <property type="entry name" value="SRP54_N"/>
    <property type="match status" value="1"/>
</dbReference>
<dbReference type="SUPFAM" id="SSF47364">
    <property type="entry name" value="Domain of the SRP/SRP receptor G-proteins"/>
    <property type="match status" value="1"/>
</dbReference>
<dbReference type="SUPFAM" id="SSF52540">
    <property type="entry name" value="P-loop containing nucleoside triphosphate hydrolases"/>
    <property type="match status" value="1"/>
</dbReference>
<dbReference type="SUPFAM" id="SSF64356">
    <property type="entry name" value="SNARE-like"/>
    <property type="match status" value="1"/>
</dbReference>
<dbReference type="PROSITE" id="PS00300">
    <property type="entry name" value="SRP54"/>
    <property type="match status" value="1"/>
</dbReference>
<evidence type="ECO:0000250" key="1"/>
<evidence type="ECO:0000250" key="2">
    <source>
        <dbReference type="UniProtKB" id="P08240"/>
    </source>
</evidence>
<evidence type="ECO:0000256" key="3">
    <source>
        <dbReference type="SAM" id="MobiDB-lite"/>
    </source>
</evidence>
<evidence type="ECO:0000269" key="4">
    <source>
    </source>
</evidence>
<evidence type="ECO:0000269" key="5">
    <source>
    </source>
</evidence>
<evidence type="ECO:0000269" key="6">
    <source>
    </source>
</evidence>
<evidence type="ECO:0000305" key="7"/>
<evidence type="ECO:0007744" key="8">
    <source>
    </source>
</evidence>
<evidence type="ECO:0007744" key="9">
    <source>
    </source>
</evidence>
<evidence type="ECO:0007829" key="10">
    <source>
        <dbReference type="PDB" id="1NRJ"/>
    </source>
</evidence>
<proteinExistence type="evidence at protein level"/>